<sequence length="101" mass="11406">MAKTSAVEKNKRRRTTVANQAAKRAALKAIIMNQALPIEERFKASIKLASLPRDGSKTRIRNRCEVSGRPRAYYRKLRMSRIALRELGNLGKVPGIVKSSW</sequence>
<accession>Q2K9K3</accession>
<gene>
    <name evidence="1" type="primary">rpsN</name>
    <name type="ordered locus">RHE_CH01688</name>
</gene>
<protein>
    <recommendedName>
        <fullName evidence="1">Small ribosomal subunit protein uS14</fullName>
    </recommendedName>
    <alternativeName>
        <fullName evidence="2">30S ribosomal protein S14</fullName>
    </alternativeName>
</protein>
<name>RS14_RHIEC</name>
<dbReference type="EMBL" id="CP000133">
    <property type="protein sequence ID" value="ABC90483.1"/>
    <property type="molecule type" value="Genomic_DNA"/>
</dbReference>
<dbReference type="RefSeq" id="WP_003573787.1">
    <property type="nucleotide sequence ID" value="NC_007761.1"/>
</dbReference>
<dbReference type="SMR" id="Q2K9K3"/>
<dbReference type="GeneID" id="91148141"/>
<dbReference type="KEGG" id="ret:RHE_CH01688"/>
<dbReference type="eggNOG" id="COG0199">
    <property type="taxonomic scope" value="Bacteria"/>
</dbReference>
<dbReference type="HOGENOM" id="CLU_139869_0_1_5"/>
<dbReference type="OrthoDB" id="9810484at2"/>
<dbReference type="Proteomes" id="UP000001936">
    <property type="component" value="Chromosome"/>
</dbReference>
<dbReference type="GO" id="GO:0005737">
    <property type="term" value="C:cytoplasm"/>
    <property type="evidence" value="ECO:0007669"/>
    <property type="project" value="UniProtKB-ARBA"/>
</dbReference>
<dbReference type="GO" id="GO:0015935">
    <property type="term" value="C:small ribosomal subunit"/>
    <property type="evidence" value="ECO:0007669"/>
    <property type="project" value="TreeGrafter"/>
</dbReference>
<dbReference type="GO" id="GO:0019843">
    <property type="term" value="F:rRNA binding"/>
    <property type="evidence" value="ECO:0007669"/>
    <property type="project" value="UniProtKB-UniRule"/>
</dbReference>
<dbReference type="GO" id="GO:0003735">
    <property type="term" value="F:structural constituent of ribosome"/>
    <property type="evidence" value="ECO:0007669"/>
    <property type="project" value="InterPro"/>
</dbReference>
<dbReference type="GO" id="GO:0006412">
    <property type="term" value="P:translation"/>
    <property type="evidence" value="ECO:0007669"/>
    <property type="project" value="UniProtKB-UniRule"/>
</dbReference>
<dbReference type="FunFam" id="1.10.287.1480:FF:000001">
    <property type="entry name" value="30S ribosomal protein S14"/>
    <property type="match status" value="1"/>
</dbReference>
<dbReference type="Gene3D" id="1.10.287.1480">
    <property type="match status" value="1"/>
</dbReference>
<dbReference type="HAMAP" id="MF_00537">
    <property type="entry name" value="Ribosomal_uS14_1"/>
    <property type="match status" value="1"/>
</dbReference>
<dbReference type="InterPro" id="IPR001209">
    <property type="entry name" value="Ribosomal_uS14"/>
</dbReference>
<dbReference type="InterPro" id="IPR023036">
    <property type="entry name" value="Ribosomal_uS14_bac/plastid"/>
</dbReference>
<dbReference type="InterPro" id="IPR018271">
    <property type="entry name" value="Ribosomal_uS14_CS"/>
</dbReference>
<dbReference type="NCBIfam" id="NF006477">
    <property type="entry name" value="PRK08881.1"/>
    <property type="match status" value="1"/>
</dbReference>
<dbReference type="PANTHER" id="PTHR19836">
    <property type="entry name" value="30S RIBOSOMAL PROTEIN S14"/>
    <property type="match status" value="1"/>
</dbReference>
<dbReference type="PANTHER" id="PTHR19836:SF19">
    <property type="entry name" value="SMALL RIBOSOMAL SUBUNIT PROTEIN US14M"/>
    <property type="match status" value="1"/>
</dbReference>
<dbReference type="Pfam" id="PF00253">
    <property type="entry name" value="Ribosomal_S14"/>
    <property type="match status" value="1"/>
</dbReference>
<dbReference type="SUPFAM" id="SSF57716">
    <property type="entry name" value="Glucocorticoid receptor-like (DNA-binding domain)"/>
    <property type="match status" value="1"/>
</dbReference>
<dbReference type="PROSITE" id="PS00527">
    <property type="entry name" value="RIBOSOMAL_S14"/>
    <property type="match status" value="1"/>
</dbReference>
<proteinExistence type="inferred from homology"/>
<evidence type="ECO:0000255" key="1">
    <source>
        <dbReference type="HAMAP-Rule" id="MF_00537"/>
    </source>
</evidence>
<evidence type="ECO:0000305" key="2"/>
<organism>
    <name type="scientific">Rhizobium etli (strain ATCC 51251 / DSM 11541 / JCM 21823 / NBRC 15573 / CFN 42)</name>
    <dbReference type="NCBI Taxonomy" id="347834"/>
    <lineage>
        <taxon>Bacteria</taxon>
        <taxon>Pseudomonadati</taxon>
        <taxon>Pseudomonadota</taxon>
        <taxon>Alphaproteobacteria</taxon>
        <taxon>Hyphomicrobiales</taxon>
        <taxon>Rhizobiaceae</taxon>
        <taxon>Rhizobium/Agrobacterium group</taxon>
        <taxon>Rhizobium</taxon>
    </lineage>
</organism>
<feature type="chain" id="PRO_1000128534" description="Small ribosomal subunit protein uS14">
    <location>
        <begin position="1"/>
        <end position="101"/>
    </location>
</feature>
<comment type="function">
    <text evidence="1">Binds 16S rRNA, required for the assembly of 30S particles and may also be responsible for determining the conformation of the 16S rRNA at the A site.</text>
</comment>
<comment type="subunit">
    <text evidence="1">Part of the 30S ribosomal subunit. Contacts proteins S3 and S10.</text>
</comment>
<comment type="similarity">
    <text evidence="1">Belongs to the universal ribosomal protein uS14 family.</text>
</comment>
<reference key="1">
    <citation type="journal article" date="2006" name="Proc. Natl. Acad. Sci. U.S.A.">
        <title>The partitioned Rhizobium etli genome: genetic and metabolic redundancy in seven interacting replicons.</title>
        <authorList>
            <person name="Gonzalez V."/>
            <person name="Santamaria R.I."/>
            <person name="Bustos P."/>
            <person name="Hernandez-Gonzalez I."/>
            <person name="Medrano-Soto A."/>
            <person name="Moreno-Hagelsieb G."/>
            <person name="Janga S.C."/>
            <person name="Ramirez M.A."/>
            <person name="Jimenez-Jacinto V."/>
            <person name="Collado-Vides J."/>
            <person name="Davila G."/>
        </authorList>
    </citation>
    <scope>NUCLEOTIDE SEQUENCE [LARGE SCALE GENOMIC DNA]</scope>
    <source>
        <strain>ATCC 51251 / DSM 11541 / JCM 21823 / NBRC 15573 / CFN 42</strain>
    </source>
</reference>
<keyword id="KW-1185">Reference proteome</keyword>
<keyword id="KW-0687">Ribonucleoprotein</keyword>
<keyword id="KW-0689">Ribosomal protein</keyword>
<keyword id="KW-0694">RNA-binding</keyword>
<keyword id="KW-0699">rRNA-binding</keyword>